<dbReference type="EMBL" id="AP009351">
    <property type="protein sequence ID" value="BAF66666.1"/>
    <property type="molecule type" value="Genomic_DNA"/>
</dbReference>
<dbReference type="RefSeq" id="WP_000769836.1">
    <property type="nucleotide sequence ID" value="NZ_JBBIAE010000011.1"/>
</dbReference>
<dbReference type="PDB" id="3KM9">
    <property type="method" value="X-ray"/>
    <property type="resolution" value="4.20 A"/>
    <property type="chains" value="X/Y=129-231"/>
</dbReference>
<dbReference type="PDBsum" id="3KM9"/>
<dbReference type="SMR" id="A0A0H3K6Z8"/>
<dbReference type="KEGG" id="sae:NWMN_0394"/>
<dbReference type="HOGENOM" id="CLU_054950_1_0_9"/>
<dbReference type="EvolutionaryTrace" id="A0A0H3K6Z8"/>
<dbReference type="Proteomes" id="UP000006386">
    <property type="component" value="Chromosome"/>
</dbReference>
<dbReference type="GO" id="GO:0005576">
    <property type="term" value="C:extracellular region"/>
    <property type="evidence" value="ECO:0007669"/>
    <property type="project" value="UniProtKB-SubCell"/>
</dbReference>
<dbReference type="Gene3D" id="2.40.50.110">
    <property type="match status" value="1"/>
</dbReference>
<dbReference type="Gene3D" id="3.10.20.120">
    <property type="match status" value="1"/>
</dbReference>
<dbReference type="InterPro" id="IPR008992">
    <property type="entry name" value="Enterotoxin"/>
</dbReference>
<dbReference type="InterPro" id="IPR015282">
    <property type="entry name" value="SSL_OB"/>
</dbReference>
<dbReference type="InterPro" id="IPR006126">
    <property type="entry name" value="Staph/Strept_toxin_CS"/>
</dbReference>
<dbReference type="InterPro" id="IPR008375">
    <property type="entry name" value="Staph_exotoxin"/>
</dbReference>
<dbReference type="InterPro" id="IPR016091">
    <property type="entry name" value="SuperAg_toxin_C"/>
</dbReference>
<dbReference type="InterPro" id="IPR013307">
    <property type="entry name" value="Superantigen_bac"/>
</dbReference>
<dbReference type="InterPro" id="IPR006123">
    <property type="entry name" value="Toxin_b-grasp_Staph/Strep"/>
</dbReference>
<dbReference type="NCBIfam" id="NF009887">
    <property type="entry name" value="PRK13346.1"/>
    <property type="match status" value="1"/>
</dbReference>
<dbReference type="Pfam" id="PF09199">
    <property type="entry name" value="SSL_OB"/>
    <property type="match status" value="1"/>
</dbReference>
<dbReference type="Pfam" id="PF02876">
    <property type="entry name" value="Stap_Strp_tox_C"/>
    <property type="match status" value="1"/>
</dbReference>
<dbReference type="PRINTS" id="PR01898">
    <property type="entry name" value="SAGSUPRFAMLY"/>
</dbReference>
<dbReference type="PRINTS" id="PR01800">
    <property type="entry name" value="STAPHEXOTOXN"/>
</dbReference>
<dbReference type="PRINTS" id="PR01501">
    <property type="entry name" value="TOXICSSTOXIN"/>
</dbReference>
<dbReference type="SUPFAM" id="SSF50203">
    <property type="entry name" value="Bacterial enterotoxins"/>
    <property type="match status" value="1"/>
</dbReference>
<dbReference type="SUPFAM" id="SSF54334">
    <property type="entry name" value="Superantigen toxins, C-terminal domain"/>
    <property type="match status" value="1"/>
</dbReference>
<dbReference type="PROSITE" id="PS00278">
    <property type="entry name" value="STAPH_STREP_TOXIN_2"/>
    <property type="match status" value="1"/>
</dbReference>
<keyword id="KW-0002">3D-structure</keyword>
<keyword id="KW-0964">Secreted</keyword>
<keyword id="KW-0732">Signal</keyword>
<keyword id="KW-0843">Virulence</keyword>
<sequence>MKLKTLAKATLALGLLTTGVITSEGQAVQAKEKQERVQHLYDIKDLHRYYSSESFEFSNISGKVENYNGSNVVRFNQENQNHQLFLLGKDKEKYKEGIEGKDVFVVKELIDPNGRLSTVGGVTKKNNKSSETNTHLFVNKVYGGNLDASIDSFSINKEEVSLKELDFKIRQHLVKNYGLYKGTTKYGKITINLKDGEKQEIDLGDKLQFERMGDVLNSKDINKIEVTLKQI</sequence>
<reference key="1">
    <citation type="journal article" date="2008" name="J. Bacteriol.">
        <title>Genome sequence of Staphylococcus aureus strain Newman and comparative analysis of staphylococcal genomes: polymorphism and evolution of two major pathogenicity islands.</title>
        <authorList>
            <person name="Baba T."/>
            <person name="Bae T."/>
            <person name="Schneewind O."/>
            <person name="Takeuchi F."/>
            <person name="Hiramatsu K."/>
        </authorList>
    </citation>
    <scope>NUCLEOTIDE SEQUENCE [LARGE SCALE GENOMIC DNA]</scope>
    <source>
        <strain>Newman</strain>
    </source>
</reference>
<reference key="2">
    <citation type="journal article" date="2013" name="Immunol. Cell Biol.">
        <title>Full functional activity of SSL7 requires binding of both complement C5 and IgA.</title>
        <authorList>
            <person name="Lorenz N."/>
            <person name="Clow F."/>
            <person name="Radcliff F.J."/>
            <person name="Fraser J.D."/>
        </authorList>
    </citation>
    <scope>FUNCTION</scope>
    <scope>INTERACTION WITH COMPLEMENT C5 AND IGA</scope>
    <source>
        <strain>Newman</strain>
    </source>
</reference>
<reference key="3">
    <citation type="journal article" date="2010" name="Proc. Natl. Acad. Sci. U.S.A.">
        <title>Structural basis for inhibition of complement C5 by the SSL7 protein from Staphylococcus aureus.</title>
        <authorList>
            <person name="Laursen N.S."/>
            <person name="Gordon N."/>
            <person name="Hermans S."/>
            <person name="Lorenz N."/>
            <person name="Jackson N."/>
            <person name="Wines B."/>
            <person name="Spillner E."/>
            <person name="Christensen J.B."/>
            <person name="Jensen M."/>
            <person name="Fredslund F."/>
            <person name="Bjerre M."/>
            <person name="Sottrup-Jensen L."/>
            <person name="Fraser J.D."/>
            <person name="Andersen G.R."/>
        </authorList>
    </citation>
    <scope>X-RAY CRYSTALLOGRAPHY (4.20 ANGSTROMS) OF 129-231</scope>
    <scope>FUNCTION</scope>
    <scope>INTERACTION WITH COMPLEMENT C5 AND IGA</scope>
</reference>
<evidence type="ECO:0000250" key="1">
    <source>
        <dbReference type="UniProtKB" id="Q2G1S8"/>
    </source>
</evidence>
<evidence type="ECO:0000250" key="2">
    <source>
        <dbReference type="UniProtKB" id="Q2G2Y0"/>
    </source>
</evidence>
<evidence type="ECO:0000255" key="3"/>
<evidence type="ECO:0000269" key="4">
    <source>
    </source>
</evidence>
<evidence type="ECO:0000269" key="5">
    <source>
    </source>
</evidence>
<evidence type="ECO:0000303" key="6">
    <source>
    </source>
</evidence>
<evidence type="ECO:0000305" key="7"/>
<protein>
    <recommendedName>
        <fullName evidence="6">Staphylococcal superantigen-like 7</fullName>
    </recommendedName>
</protein>
<accession>A0A0H3K6Z8</accession>
<gene>
    <name evidence="6" type="primary">ssl7</name>
    <name type="ordered locus">NWMN_0394</name>
</gene>
<organism>
    <name type="scientific">Staphylococcus aureus (strain Newman)</name>
    <dbReference type="NCBI Taxonomy" id="426430"/>
    <lineage>
        <taxon>Bacteria</taxon>
        <taxon>Bacillati</taxon>
        <taxon>Bacillota</taxon>
        <taxon>Bacilli</taxon>
        <taxon>Bacillales</taxon>
        <taxon>Staphylococcaceae</taxon>
        <taxon>Staphylococcus</taxon>
    </lineage>
</organism>
<name>SSL7_STAAE</name>
<feature type="signal peptide" evidence="3">
    <location>
        <begin position="1"/>
        <end position="30"/>
    </location>
</feature>
<feature type="chain" id="PRO_0000447560" description="Staphylococcal superantigen-like 7">
    <location>
        <begin position="31"/>
        <end position="231"/>
    </location>
</feature>
<comment type="function">
    <text evidence="2 5">Plays a role in the inhibition of host complement-mediated lysis and serum bactericidal activity by interacting with complement component C5 (PubMed:23797068). Affects all three pathways of complement activation and inhibits the cleavage of C5 by preventing its binding to C5 convertases. In turn, prevents C5a-mediated neutrophil migration (By similarity).</text>
</comment>
<comment type="subunit">
    <text evidence="4 5">Interacts with host IgA and complement C5.</text>
</comment>
<comment type="subcellular location">
    <subcellularLocation>
        <location evidence="1">Secreted</location>
    </subcellularLocation>
</comment>
<comment type="similarity">
    <text evidence="7">Belongs to the staphylococcal/streptococcal toxin family.</text>
</comment>
<proteinExistence type="evidence at protein level"/>